<protein>
    <recommendedName>
        <fullName evidence="2">Pimeloyl-[acyl-carrier protein] methyl ester esterase</fullName>
        <ecNumber evidence="2">3.1.1.85</ecNumber>
    </recommendedName>
    <alternativeName>
        <fullName evidence="2">Biotin synthesis protein BioH</fullName>
    </alternativeName>
    <alternativeName>
        <fullName evidence="2">Carboxylesterase BioH</fullName>
    </alternativeName>
</protein>
<name>BIOH_HAMD5</name>
<evidence type="ECO:0000255" key="1"/>
<evidence type="ECO:0000255" key="2">
    <source>
        <dbReference type="HAMAP-Rule" id="MF_01260"/>
    </source>
</evidence>
<accession>C4K407</accession>
<gene>
    <name evidence="2" type="primary">bioH</name>
    <name type="ordered locus">HDEF_0547</name>
</gene>
<feature type="chain" id="PRO_1000214126" description="Pimeloyl-[acyl-carrier protein] methyl ester esterase">
    <location>
        <begin position="1"/>
        <end position="259"/>
    </location>
</feature>
<feature type="domain" description="AB hydrolase-1" evidence="1">
    <location>
        <begin position="16"/>
        <end position="241"/>
    </location>
</feature>
<feature type="active site" description="Nucleophile" evidence="2">
    <location>
        <position position="82"/>
    </location>
</feature>
<feature type="active site" evidence="2">
    <location>
        <position position="207"/>
    </location>
</feature>
<feature type="active site" evidence="2">
    <location>
        <position position="235"/>
    </location>
</feature>
<feature type="binding site" evidence="2">
    <location>
        <position position="22"/>
    </location>
    <ligand>
        <name>substrate</name>
    </ligand>
</feature>
<feature type="binding site" evidence="2">
    <location>
        <begin position="82"/>
        <end position="83"/>
    </location>
    <ligand>
        <name>substrate</name>
    </ligand>
</feature>
<feature type="binding site" evidence="2">
    <location>
        <begin position="143"/>
        <end position="147"/>
    </location>
    <ligand>
        <name>substrate</name>
    </ligand>
</feature>
<feature type="binding site" evidence="2">
    <location>
        <position position="235"/>
    </location>
    <ligand>
        <name>substrate</name>
    </ligand>
</feature>
<comment type="function">
    <text evidence="2">The physiological role of BioH is to remove the methyl group introduced by BioC when the pimeloyl moiety is complete. It allows to synthesize pimeloyl-ACP via the fatty acid synthetic pathway through the hydrolysis of the ester bonds of pimeloyl-ACP esters.</text>
</comment>
<comment type="catalytic activity">
    <reaction evidence="2">
        <text>6-carboxyhexanoyl-[ACP] methyl ester + H2O = 6-carboxyhexanoyl-[ACP] + methanol + H(+)</text>
        <dbReference type="Rhea" id="RHEA:42700"/>
        <dbReference type="Rhea" id="RHEA-COMP:9955"/>
        <dbReference type="Rhea" id="RHEA-COMP:10186"/>
        <dbReference type="ChEBI" id="CHEBI:15377"/>
        <dbReference type="ChEBI" id="CHEBI:15378"/>
        <dbReference type="ChEBI" id="CHEBI:17790"/>
        <dbReference type="ChEBI" id="CHEBI:78846"/>
        <dbReference type="ChEBI" id="CHEBI:82735"/>
        <dbReference type="EC" id="3.1.1.85"/>
    </reaction>
</comment>
<comment type="pathway">
    <text evidence="2">Cofactor biosynthesis; biotin biosynthesis.</text>
</comment>
<comment type="subunit">
    <text evidence="2">Monomer.</text>
</comment>
<comment type="subcellular location">
    <subcellularLocation>
        <location evidence="2">Cytoplasm</location>
    </subcellularLocation>
</comment>
<comment type="similarity">
    <text evidence="2">Belongs to the AB hydrolase superfamily. Carboxylesterase BioH family.</text>
</comment>
<sequence>MKNLYRYSCGEGKLDFVMLHGWGMNSNAWRYIINRFGSHFRLHLFDLPGYGFSQSEESFTLPEISETVLKKAPPQAIWLGWSMGGCIASEIALRYPERVLALITVCSSPCFVSQHQWPRISWQVLSCFEQKLEDHLQNTLEQFLLLQTLGTLNSQRDTTSLKSFLFSRPLPKKEVLKAGLKILRYTDMRDSLNAISVPFLRIYGKLDALVPCKIAELLDEAWPHTESVIMHQSAHVPFISHTDDFLEVILYFYQKYFSH</sequence>
<dbReference type="EC" id="3.1.1.85" evidence="2"/>
<dbReference type="EMBL" id="CP001277">
    <property type="protein sequence ID" value="ACQ67300.1"/>
    <property type="molecule type" value="Genomic_DNA"/>
</dbReference>
<dbReference type="RefSeq" id="WP_015873124.1">
    <property type="nucleotide sequence ID" value="NC_012751.1"/>
</dbReference>
<dbReference type="SMR" id="C4K407"/>
<dbReference type="STRING" id="572265.HDEF_0547"/>
<dbReference type="ESTHER" id="hamd5-bioh">
    <property type="family name" value="BioH"/>
</dbReference>
<dbReference type="MEROPS" id="S33.994"/>
<dbReference type="GeneID" id="66260428"/>
<dbReference type="KEGG" id="hde:HDEF_0547"/>
<dbReference type="eggNOG" id="COG0596">
    <property type="taxonomic scope" value="Bacteria"/>
</dbReference>
<dbReference type="HOGENOM" id="CLU_020336_12_2_6"/>
<dbReference type="UniPathway" id="UPA00078"/>
<dbReference type="Proteomes" id="UP000002334">
    <property type="component" value="Chromosome"/>
</dbReference>
<dbReference type="GO" id="GO:0005737">
    <property type="term" value="C:cytoplasm"/>
    <property type="evidence" value="ECO:0007669"/>
    <property type="project" value="UniProtKB-SubCell"/>
</dbReference>
<dbReference type="GO" id="GO:0016020">
    <property type="term" value="C:membrane"/>
    <property type="evidence" value="ECO:0007669"/>
    <property type="project" value="TreeGrafter"/>
</dbReference>
<dbReference type="GO" id="GO:0090499">
    <property type="term" value="F:pimelyl-[acyl-carrier protein] methyl ester esterase activity"/>
    <property type="evidence" value="ECO:0007669"/>
    <property type="project" value="UniProtKB-EC"/>
</dbReference>
<dbReference type="GO" id="GO:0009102">
    <property type="term" value="P:biotin biosynthetic process"/>
    <property type="evidence" value="ECO:0007669"/>
    <property type="project" value="UniProtKB-UniRule"/>
</dbReference>
<dbReference type="Gene3D" id="3.40.50.1820">
    <property type="entry name" value="alpha/beta hydrolase"/>
    <property type="match status" value="1"/>
</dbReference>
<dbReference type="HAMAP" id="MF_01260">
    <property type="entry name" value="Carboxylester"/>
    <property type="match status" value="1"/>
</dbReference>
<dbReference type="InterPro" id="IPR000073">
    <property type="entry name" value="AB_hydrolase_1"/>
</dbReference>
<dbReference type="InterPro" id="IPR029058">
    <property type="entry name" value="AB_hydrolase_fold"/>
</dbReference>
<dbReference type="InterPro" id="IPR050266">
    <property type="entry name" value="AB_hydrolase_sf"/>
</dbReference>
<dbReference type="InterPro" id="IPR010076">
    <property type="entry name" value="BioH"/>
</dbReference>
<dbReference type="NCBIfam" id="TIGR01738">
    <property type="entry name" value="bioH"/>
    <property type="match status" value="1"/>
</dbReference>
<dbReference type="PANTHER" id="PTHR43798:SF31">
    <property type="entry name" value="AB HYDROLASE SUPERFAMILY PROTEIN YCLE"/>
    <property type="match status" value="1"/>
</dbReference>
<dbReference type="PANTHER" id="PTHR43798">
    <property type="entry name" value="MONOACYLGLYCEROL LIPASE"/>
    <property type="match status" value="1"/>
</dbReference>
<dbReference type="Pfam" id="PF00561">
    <property type="entry name" value="Abhydrolase_1"/>
    <property type="match status" value="1"/>
</dbReference>
<dbReference type="SUPFAM" id="SSF53474">
    <property type="entry name" value="alpha/beta-Hydrolases"/>
    <property type="match status" value="1"/>
</dbReference>
<reference key="1">
    <citation type="journal article" date="2009" name="Proc. Natl. Acad. Sci. U.S.A.">
        <title>Hamiltonella defensa, genome evolution of protective bacterial endosymbiont from pathogenic ancestors.</title>
        <authorList>
            <person name="Degnan P.H."/>
            <person name="Yu Y."/>
            <person name="Sisneros N."/>
            <person name="Wing R.A."/>
            <person name="Moran N.A."/>
        </authorList>
    </citation>
    <scope>NUCLEOTIDE SEQUENCE [LARGE SCALE GENOMIC DNA]</scope>
    <source>
        <strain>5AT</strain>
    </source>
</reference>
<keyword id="KW-0093">Biotin biosynthesis</keyword>
<keyword id="KW-0963">Cytoplasm</keyword>
<keyword id="KW-0378">Hydrolase</keyword>
<keyword id="KW-0719">Serine esterase</keyword>
<proteinExistence type="inferred from homology"/>
<organism>
    <name type="scientific">Hamiltonella defensa subsp. Acyrthosiphon pisum (strain 5AT)</name>
    <dbReference type="NCBI Taxonomy" id="572265"/>
    <lineage>
        <taxon>Bacteria</taxon>
        <taxon>Pseudomonadati</taxon>
        <taxon>Pseudomonadota</taxon>
        <taxon>Gammaproteobacteria</taxon>
        <taxon>Enterobacterales</taxon>
        <taxon>Enterobacteriaceae</taxon>
        <taxon>aphid secondary symbionts</taxon>
        <taxon>Candidatus Hamiltonella</taxon>
    </lineage>
</organism>